<reference key="1">
    <citation type="journal article" date="1994" name="Biochem. Biophys. Res. Commun.">
        <title>Cloning of a novel cDNA homologous to CHIP28 water channel from ocular ciliary epithelium.</title>
        <authorList>
            <person name="Patil R.V."/>
            <person name="Yang X."/>
            <person name="Saito I."/>
            <person name="Coca-Prados M."/>
            <person name="Wax M.B."/>
        </authorList>
    </citation>
    <scope>NUCLEOTIDE SEQUENCE [MRNA]</scope>
    <source>
        <tissue>Ocular ciliary epithelium</tissue>
    </source>
</reference>
<reference key="2">
    <citation type="submission" date="1997-11" db="EMBL/GenBank/DDBJ databases">
        <title>Nucleotide sequence of an aquaporin cDNA from bovine bone marrow.</title>
        <authorList>
            <person name="Joshi S."/>
            <person name="Recinos A."/>
            <person name="Jap B.K."/>
        </authorList>
    </citation>
    <scope>NUCLEOTIDE SEQUENCE [MRNA]</scope>
    <source>
        <tissue>Bone marrow</tissue>
    </source>
</reference>
<reference key="3">
    <citation type="journal article" date="2005" name="BMC Genomics">
        <title>Characterization of 954 bovine full-CDS cDNA sequences.</title>
        <authorList>
            <person name="Harhay G.P."/>
            <person name="Sonstegard T.S."/>
            <person name="Keele J.W."/>
            <person name="Heaton M.P."/>
            <person name="Clawson M.L."/>
            <person name="Snelling W.M."/>
            <person name="Wiedmann R.T."/>
            <person name="Van Tassell C.P."/>
            <person name="Smith T.P.L."/>
        </authorList>
    </citation>
    <scope>NUCLEOTIDE SEQUENCE [LARGE SCALE MRNA]</scope>
</reference>
<reference key="4">
    <citation type="submission" date="2005-09" db="EMBL/GenBank/DDBJ databases">
        <authorList>
            <consortium name="NIH - Mammalian Gene Collection (MGC) project"/>
        </authorList>
    </citation>
    <scope>NUCLEOTIDE SEQUENCE [LARGE SCALE MRNA]</scope>
    <source>
        <strain>Hereford</strain>
        <tissue>Ascending colon</tissue>
    </source>
</reference>
<reference key="5">
    <citation type="journal article" date="2000" name="Acta Crystallogr. D">
        <title>Crystallization and preliminary X-ray crystallographic analysis of water channel AQP1.</title>
        <authorList>
            <person name="Sui H."/>
            <person name="Walian P.J."/>
            <person name="Tang G."/>
            <person name="Oh A."/>
            <person name="Jap B.K."/>
        </authorList>
    </citation>
    <scope>X-RAY CRYSTALLOGRAPHY (2.2 ANGSTROMS)</scope>
</reference>
<reference key="6">
    <citation type="journal article" date="2001" name="Nature">
        <title>Structural basis of water-specific transport through the AQP1 water channel.</title>
        <authorList>
            <person name="Sui H."/>
            <person name="Han B.-G."/>
            <person name="Lee J.K."/>
            <person name="Walian P."/>
            <person name="Jap B.K."/>
        </authorList>
    </citation>
    <scope>X-RAY CRYSTALLOGRAPHY (2.2 ANGSTROMS)</scope>
    <scope>SUBUNIT</scope>
</reference>
<accession>P47865</accession>
<accession>Q2HJE2</accession>
<keyword id="KW-0002">3D-structure</keyword>
<keyword id="KW-1003">Cell membrane</keyword>
<keyword id="KW-0325">Glycoprotein</keyword>
<keyword id="KW-0472">Membrane</keyword>
<keyword id="KW-0597">Phosphoprotein</keyword>
<keyword id="KW-1185">Reference proteome</keyword>
<keyword id="KW-0677">Repeat</keyword>
<keyword id="KW-0812">Transmembrane</keyword>
<keyword id="KW-1133">Transmembrane helix</keyword>
<keyword id="KW-0813">Transport</keyword>
<feature type="chain" id="PRO_0000063918" description="Aquaporin-1">
    <location>
        <begin position="1"/>
        <end position="271"/>
    </location>
</feature>
<feature type="topological domain" description="Cytoplasmic" evidence="6">
    <location>
        <begin position="1"/>
        <end position="11"/>
    </location>
</feature>
<feature type="transmembrane region" description="Helical; Name=Helix 1" evidence="2">
    <location>
        <begin position="12"/>
        <end position="29"/>
    </location>
</feature>
<feature type="topological domain" description="Extracellular" evidence="6">
    <location>
        <begin position="30"/>
        <end position="48"/>
    </location>
</feature>
<feature type="transmembrane region" description="Helical; Name=Helix 2" evidence="2">
    <location>
        <begin position="49"/>
        <end position="67"/>
    </location>
</feature>
<feature type="topological domain" description="Cytoplasmic" evidence="6">
    <location>
        <begin position="68"/>
        <end position="70"/>
    </location>
</feature>
<feature type="intramembrane region" evidence="2">
    <location>
        <begin position="71"/>
        <end position="84"/>
    </location>
</feature>
<feature type="topological domain" description="Cytoplasmic" evidence="6">
    <location>
        <begin position="85"/>
        <end position="92"/>
    </location>
</feature>
<feature type="transmembrane region" description="Helical; Name=Helix 3" evidence="2">
    <location>
        <begin position="93"/>
        <end position="111"/>
    </location>
</feature>
<feature type="topological domain" description="Extracellular" evidence="6">
    <location>
        <begin position="112"/>
        <end position="135"/>
    </location>
</feature>
<feature type="transmembrane region" description="Helical; Name=Helix 4" evidence="2">
    <location>
        <begin position="136"/>
        <end position="155"/>
    </location>
</feature>
<feature type="topological domain" description="Cytoplasmic" evidence="6">
    <location>
        <begin position="156"/>
        <end position="165"/>
    </location>
</feature>
<feature type="transmembrane region" description="Helical; Name=Helix 5" evidence="2">
    <location>
        <begin position="166"/>
        <end position="183"/>
    </location>
</feature>
<feature type="topological domain" description="Extracellular" evidence="6">
    <location>
        <begin position="184"/>
        <end position="188"/>
    </location>
</feature>
<feature type="intramembrane region" evidence="2">
    <location>
        <begin position="189"/>
        <end position="201"/>
    </location>
</feature>
<feature type="topological domain" description="Extracellular" evidence="6">
    <location>
        <begin position="202"/>
        <end position="208"/>
    </location>
</feature>
<feature type="transmembrane region" description="Helical; Name=Helix 6" evidence="2">
    <location>
        <begin position="209"/>
        <end position="226"/>
    </location>
</feature>
<feature type="topological domain" description="Cytoplasmic" evidence="6">
    <location>
        <begin position="227"/>
        <end position="271"/>
    </location>
</feature>
<feature type="short sequence motif" description="NPA 1" evidence="2">
    <location>
        <begin position="78"/>
        <end position="80"/>
    </location>
</feature>
<feature type="short sequence motif" description="NPA 2" evidence="2">
    <location>
        <begin position="194"/>
        <end position="196"/>
    </location>
</feature>
<feature type="modified residue" description="Phosphoserine" evidence="3">
    <location>
        <position position="249"/>
    </location>
</feature>
<feature type="modified residue" description="Phosphotyrosine" evidence="3">
    <location>
        <position position="255"/>
    </location>
</feature>
<feature type="modified residue" description="Phosphoserine" evidence="3">
    <location>
        <position position="264"/>
    </location>
</feature>
<feature type="glycosylation site" description="N-linked (GlcNAc...) asparagine" evidence="4">
    <location>
        <position position="42"/>
    </location>
</feature>
<feature type="helix" evidence="7">
    <location>
        <begin position="6"/>
        <end position="33"/>
    </location>
</feature>
<feature type="helix" evidence="7">
    <location>
        <begin position="34"/>
        <end position="36"/>
    </location>
</feature>
<feature type="helix" evidence="7">
    <location>
        <begin position="51"/>
        <end position="73"/>
    </location>
</feature>
<feature type="helix" evidence="7">
    <location>
        <begin position="79"/>
        <end position="87"/>
    </location>
</feature>
<feature type="helix" evidence="7">
    <location>
        <begin position="93"/>
        <end position="117"/>
    </location>
</feature>
<feature type="turn" evidence="7">
    <location>
        <begin position="118"/>
        <end position="120"/>
    </location>
</feature>
<feature type="helix" evidence="7">
    <location>
        <begin position="139"/>
        <end position="141"/>
    </location>
</feature>
<feature type="helix" evidence="7">
    <location>
        <begin position="142"/>
        <end position="158"/>
    </location>
</feature>
<feature type="helix" evidence="7">
    <location>
        <begin position="170"/>
        <end position="189"/>
    </location>
</feature>
<feature type="helix" evidence="7">
    <location>
        <begin position="195"/>
        <end position="204"/>
    </location>
</feature>
<feature type="turn" evidence="7">
    <location>
        <begin position="209"/>
        <end position="212"/>
    </location>
</feature>
<feature type="helix" evidence="7">
    <location>
        <begin position="213"/>
        <end position="230"/>
    </location>
</feature>
<feature type="turn" evidence="7">
    <location>
        <begin position="231"/>
        <end position="233"/>
    </location>
</feature>
<feature type="helix" evidence="7">
    <location>
        <begin position="240"/>
        <end position="244"/>
    </location>
</feature>
<feature type="helix" evidence="7">
    <location>
        <begin position="245"/>
        <end position="247"/>
    </location>
</feature>
<name>AQP1_BOVIN</name>
<organism>
    <name type="scientific">Bos taurus</name>
    <name type="common">Bovine</name>
    <dbReference type="NCBI Taxonomy" id="9913"/>
    <lineage>
        <taxon>Eukaryota</taxon>
        <taxon>Metazoa</taxon>
        <taxon>Chordata</taxon>
        <taxon>Craniata</taxon>
        <taxon>Vertebrata</taxon>
        <taxon>Euteleostomi</taxon>
        <taxon>Mammalia</taxon>
        <taxon>Eutheria</taxon>
        <taxon>Laurasiatheria</taxon>
        <taxon>Artiodactyla</taxon>
        <taxon>Ruminantia</taxon>
        <taxon>Pecora</taxon>
        <taxon>Bovidae</taxon>
        <taxon>Bovinae</taxon>
        <taxon>Bos</taxon>
    </lineage>
</organism>
<evidence type="ECO:0000250" key="1"/>
<evidence type="ECO:0000250" key="2">
    <source>
        <dbReference type="UniProtKB" id="P29972"/>
    </source>
</evidence>
<evidence type="ECO:0000250" key="3">
    <source>
        <dbReference type="UniProtKB" id="Q02013"/>
    </source>
</evidence>
<evidence type="ECO:0000255" key="4"/>
<evidence type="ECO:0000269" key="5">
    <source>
    </source>
</evidence>
<evidence type="ECO:0000305" key="6"/>
<evidence type="ECO:0007829" key="7">
    <source>
        <dbReference type="PDB" id="1J4N"/>
    </source>
</evidence>
<sequence length="271" mass="28800">MASEFKKKLFWRAVVAEFLAMILFIFISIGSALGFHYPIKSNQTTGAVQDNVKVSLAFGLSIATLAQSVGHISGAHLNPAVTLGLLLSCQISVLRAIMYIIAQCVGAIVATAILSGITSSLPDNSLGLNALAPGVNSGQGLGIEIIGTLQLVLCVLATTDRRRRDLGGSGPLAIGFSVALGHLLAIDYTGCGINPARSFGSSVITHNFQDHWIFWVGPFIGAALAVLIYDFILAPRSSDLTDRVKVWTSGQVEEYDLDADDINSRVEMKPK</sequence>
<gene>
    <name evidence="2" type="primary">AQP1</name>
</gene>
<proteinExistence type="evidence at protein level"/>
<protein>
    <recommendedName>
        <fullName evidence="2">Aquaporin-1</fullName>
        <shortName>AQP-1</shortName>
    </recommendedName>
    <alternativeName>
        <fullName>Aquaporin-CHIP</fullName>
    </alternativeName>
    <alternativeName>
        <fullName>Water channel protein CHIP29</fullName>
    </alternativeName>
</protein>
<comment type="function">
    <text evidence="2">Forms a water channel that facilitates the transport of water across cell membranes, playing a crucial role in water homeostasis in various tissues. Could also be permeable to small solutes including hydrogen peroxide, glycerol and gases such as amonnia (NH3), nitric oxide (NO) and carbon dioxide (CO2). Recruited to the ankyrin-1 complex, a multiprotein complex of the erythrocyte membrane, it could be part of a CO2 metabolon, linking facilitated diffusion of CO2 across the membrane, anion exchange of Cl(-)/HCO3(-) and interconversion of dissolved CO2 and carbonic acid in the cytosol. In vitro, it shows non-selective gated cation channel activity and may be permeable to cations like K(+) and Na(+) in vivo.</text>
</comment>
<comment type="catalytic activity">
    <reaction evidence="2">
        <text>H2O(in) = H2O(out)</text>
        <dbReference type="Rhea" id="RHEA:29667"/>
        <dbReference type="ChEBI" id="CHEBI:15377"/>
    </reaction>
</comment>
<comment type="catalytic activity">
    <reaction evidence="2">
        <text>nitric oxide(out) = nitric oxide(in)</text>
        <dbReference type="Rhea" id="RHEA:74895"/>
        <dbReference type="ChEBI" id="CHEBI:16480"/>
    </reaction>
</comment>
<comment type="catalytic activity">
    <reaction evidence="2">
        <text>CO2(out) = CO2(in)</text>
        <dbReference type="Rhea" id="RHEA:74891"/>
        <dbReference type="ChEBI" id="CHEBI:16526"/>
    </reaction>
</comment>
<comment type="catalytic activity">
    <reaction evidence="2">
        <text>glycerol(in) = glycerol(out)</text>
        <dbReference type="Rhea" id="RHEA:29675"/>
        <dbReference type="ChEBI" id="CHEBI:17754"/>
    </reaction>
</comment>
<comment type="catalytic activity">
    <reaction evidence="2">
        <text>H2O2(out) = H2O2(in)</text>
        <dbReference type="Rhea" id="RHEA:74375"/>
        <dbReference type="ChEBI" id="CHEBI:16240"/>
    </reaction>
</comment>
<comment type="catalytic activity">
    <reaction evidence="2">
        <text>K(+)(in) = K(+)(out)</text>
        <dbReference type="Rhea" id="RHEA:29463"/>
        <dbReference type="ChEBI" id="CHEBI:29103"/>
    </reaction>
</comment>
<comment type="catalytic activity">
    <reaction evidence="2">
        <text>Na(+)(in) = Na(+)(out)</text>
        <dbReference type="Rhea" id="RHEA:34963"/>
        <dbReference type="ChEBI" id="CHEBI:29101"/>
    </reaction>
</comment>
<comment type="subunit">
    <text evidence="1 2 3 5">Homotetramer; each monomer provides an independent water pore (PubMed:11780053). Component of the ankyrin-1 complex in the erythrocyte, composed of ANK1, RHCE, RHAG, SLC4A1, EPB42, GYPA, GYPB and AQP1 (By similarity). Interacts with EPHB2; involved in endolymph production in the inner ear (By similarity). Identified in a complex with STOM. Interacts (via the N-terminal) with ANK1 (via ANK 1-5 repeats). Interacts (via the C-terminal) with EPB42 (By similarity).</text>
</comment>
<comment type="subcellular location">
    <subcellularLocation>
        <location evidence="2">Cell membrane</location>
        <topology evidence="2">Multi-pass membrane protein</topology>
    </subcellularLocation>
</comment>
<comment type="domain">
    <text evidence="2">Aquaporins contain two tandem repeats each containing three membrane-spanning domains and a pore-forming loop with the signature motif Asn-Pro-Ala (NPA).</text>
</comment>
<comment type="similarity">
    <text evidence="6">Belongs to the MIP/aquaporin (TC 1.A.8) family.</text>
</comment>
<dbReference type="EMBL" id="S74759">
    <property type="protein sequence ID" value="AAB32365.1"/>
    <property type="molecule type" value="mRNA"/>
</dbReference>
<dbReference type="EMBL" id="AF028005">
    <property type="protein sequence ID" value="AAB84190.1"/>
    <property type="molecule type" value="mRNA"/>
</dbReference>
<dbReference type="EMBL" id="BT025412">
    <property type="protein sequence ID" value="ABF57368.1"/>
    <property type="molecule type" value="mRNA"/>
</dbReference>
<dbReference type="EMBL" id="BC105525">
    <property type="protein sequence ID" value="AAI05526.1"/>
    <property type="molecule type" value="mRNA"/>
</dbReference>
<dbReference type="PIR" id="JC2348">
    <property type="entry name" value="JC2348"/>
</dbReference>
<dbReference type="RefSeq" id="NP_777127.1">
    <property type="nucleotide sequence ID" value="NM_174702.3"/>
</dbReference>
<dbReference type="PDB" id="1J4N">
    <property type="method" value="X-ray"/>
    <property type="resolution" value="2.20 A"/>
    <property type="chains" value="A=1-271"/>
</dbReference>
<dbReference type="PDBsum" id="1J4N"/>
<dbReference type="SMR" id="P47865"/>
<dbReference type="FunCoup" id="P47865">
    <property type="interactions" value="151"/>
</dbReference>
<dbReference type="STRING" id="9913.ENSBTAP00000000993"/>
<dbReference type="GlyCosmos" id="P47865">
    <property type="glycosylation" value="1 site, No reported glycans"/>
</dbReference>
<dbReference type="GlyGen" id="P47865">
    <property type="glycosylation" value="1 site"/>
</dbReference>
<dbReference type="PaxDb" id="9913-ENSBTAP00000000993"/>
<dbReference type="GeneID" id="282653"/>
<dbReference type="KEGG" id="bta:282653"/>
<dbReference type="CTD" id="358"/>
<dbReference type="VEuPathDB" id="HostDB:ENSBTAG00000000745"/>
<dbReference type="eggNOG" id="KOG0223">
    <property type="taxonomic scope" value="Eukaryota"/>
</dbReference>
<dbReference type="HOGENOM" id="CLU_020019_3_3_1"/>
<dbReference type="InParanoid" id="P47865"/>
<dbReference type="OMA" id="FKKKMFW"/>
<dbReference type="OrthoDB" id="3222at2759"/>
<dbReference type="TreeFam" id="TF312940"/>
<dbReference type="Reactome" id="R-BTA-1237044">
    <property type="pathway name" value="Erythrocytes take up carbon dioxide and release oxygen"/>
</dbReference>
<dbReference type="Reactome" id="R-BTA-1247673">
    <property type="pathway name" value="Erythrocytes take up oxygen and release carbon dioxide"/>
</dbReference>
<dbReference type="Reactome" id="R-BTA-432040">
    <property type="pathway name" value="Vasopressin regulates renal water homeostasis via Aquaporins"/>
</dbReference>
<dbReference type="Reactome" id="R-BTA-432047">
    <property type="pathway name" value="Passive transport by Aquaporins"/>
</dbReference>
<dbReference type="EvolutionaryTrace" id="P47865"/>
<dbReference type="Proteomes" id="UP000009136">
    <property type="component" value="Chromosome 4"/>
</dbReference>
<dbReference type="Bgee" id="ENSBTAG00000000745">
    <property type="expression patterns" value="Expressed in cortex of kidney and 99 other cell types or tissues"/>
</dbReference>
<dbReference type="GO" id="GO:0170014">
    <property type="term" value="C:ankyrin-1 complex"/>
    <property type="evidence" value="ECO:0000250"/>
    <property type="project" value="UniProtKB"/>
</dbReference>
<dbReference type="GO" id="GO:0045177">
    <property type="term" value="C:apical part of cell"/>
    <property type="evidence" value="ECO:0000250"/>
    <property type="project" value="UniProtKB"/>
</dbReference>
<dbReference type="GO" id="GO:0016324">
    <property type="term" value="C:apical plasma membrane"/>
    <property type="evidence" value="ECO:0000250"/>
    <property type="project" value="UniProtKB"/>
</dbReference>
<dbReference type="GO" id="GO:0009925">
    <property type="term" value="C:basal plasma membrane"/>
    <property type="evidence" value="ECO:0000250"/>
    <property type="project" value="UniProtKB"/>
</dbReference>
<dbReference type="GO" id="GO:0016323">
    <property type="term" value="C:basolateral plasma membrane"/>
    <property type="evidence" value="ECO:0000250"/>
    <property type="project" value="UniProtKB"/>
</dbReference>
<dbReference type="GO" id="GO:0005903">
    <property type="term" value="C:brush border"/>
    <property type="evidence" value="ECO:0000250"/>
    <property type="project" value="UniProtKB"/>
</dbReference>
<dbReference type="GO" id="GO:0031526">
    <property type="term" value="C:brush border membrane"/>
    <property type="evidence" value="ECO:0000250"/>
    <property type="project" value="UniProtKB"/>
</dbReference>
<dbReference type="GO" id="GO:0032127">
    <property type="term" value="C:dense core granule membrane"/>
    <property type="evidence" value="ECO:0000314"/>
    <property type="project" value="MGI"/>
</dbReference>
<dbReference type="GO" id="GO:0031965">
    <property type="term" value="C:nuclear membrane"/>
    <property type="evidence" value="ECO:0000250"/>
    <property type="project" value="UniProtKB"/>
</dbReference>
<dbReference type="GO" id="GO:0005634">
    <property type="term" value="C:nucleus"/>
    <property type="evidence" value="ECO:0000250"/>
    <property type="project" value="UniProtKB"/>
</dbReference>
<dbReference type="GO" id="GO:0005886">
    <property type="term" value="C:plasma membrane"/>
    <property type="evidence" value="ECO:0000250"/>
    <property type="project" value="UniProtKB"/>
</dbReference>
<dbReference type="GO" id="GO:0042383">
    <property type="term" value="C:sarcolemma"/>
    <property type="evidence" value="ECO:0000250"/>
    <property type="project" value="UniProtKB"/>
</dbReference>
<dbReference type="GO" id="GO:0008519">
    <property type="term" value="F:ammonium channel activity"/>
    <property type="evidence" value="ECO:0000250"/>
    <property type="project" value="UniProtKB"/>
</dbReference>
<dbReference type="GO" id="GO:0035379">
    <property type="term" value="F:carbon dioxide transmembrane transporter activity"/>
    <property type="evidence" value="ECO:0000250"/>
    <property type="project" value="UniProtKB"/>
</dbReference>
<dbReference type="GO" id="GO:0015168">
    <property type="term" value="F:glycerol transmembrane transporter activity"/>
    <property type="evidence" value="ECO:0000250"/>
    <property type="project" value="UniProtKB"/>
</dbReference>
<dbReference type="GO" id="GO:0005223">
    <property type="term" value="F:intracellularly cGMP-activated cation channel activity"/>
    <property type="evidence" value="ECO:0000250"/>
    <property type="project" value="UniProtKB"/>
</dbReference>
<dbReference type="GO" id="GO:0030184">
    <property type="term" value="F:nitric oxide transmembrane transporter activity"/>
    <property type="evidence" value="ECO:0000250"/>
    <property type="project" value="UniProtKB"/>
</dbReference>
<dbReference type="GO" id="GO:0005267">
    <property type="term" value="F:potassium channel activity"/>
    <property type="evidence" value="ECO:0000250"/>
    <property type="project" value="UniProtKB"/>
</dbReference>
<dbReference type="GO" id="GO:0022857">
    <property type="term" value="F:transmembrane transporter activity"/>
    <property type="evidence" value="ECO:0000250"/>
    <property type="project" value="UniProtKB"/>
</dbReference>
<dbReference type="GO" id="GO:0015250">
    <property type="term" value="F:water channel activity"/>
    <property type="evidence" value="ECO:0000250"/>
    <property type="project" value="UniProtKB"/>
</dbReference>
<dbReference type="GO" id="GO:0005372">
    <property type="term" value="F:water transmembrane transporter activity"/>
    <property type="evidence" value="ECO:0000250"/>
    <property type="project" value="UniProtKB"/>
</dbReference>
<dbReference type="GO" id="GO:0072488">
    <property type="term" value="P:ammonium transmembrane transport"/>
    <property type="evidence" value="ECO:0000250"/>
    <property type="project" value="UniProtKB"/>
</dbReference>
<dbReference type="GO" id="GO:0035378">
    <property type="term" value="P:carbon dioxide transmembrane transport"/>
    <property type="evidence" value="ECO:0000250"/>
    <property type="project" value="UniProtKB"/>
</dbReference>
<dbReference type="GO" id="GO:0015670">
    <property type="term" value="P:carbon dioxide transport"/>
    <property type="evidence" value="ECO:0000250"/>
    <property type="project" value="UniProtKB"/>
</dbReference>
<dbReference type="GO" id="GO:0006884">
    <property type="term" value="P:cell volume homeostasis"/>
    <property type="evidence" value="ECO:0000250"/>
    <property type="project" value="UniProtKB"/>
</dbReference>
<dbReference type="GO" id="GO:0019725">
    <property type="term" value="P:cellular homeostasis"/>
    <property type="evidence" value="ECO:0000250"/>
    <property type="project" value="UniProtKB"/>
</dbReference>
<dbReference type="GO" id="GO:0071474">
    <property type="term" value="P:cellular hyperosmotic response"/>
    <property type="evidence" value="ECO:0000250"/>
    <property type="project" value="UniProtKB"/>
</dbReference>
<dbReference type="GO" id="GO:0071320">
    <property type="term" value="P:cellular response to cAMP"/>
    <property type="evidence" value="ECO:0000250"/>
    <property type="project" value="UniProtKB"/>
</dbReference>
<dbReference type="GO" id="GO:0071280">
    <property type="term" value="P:cellular response to copper ion"/>
    <property type="evidence" value="ECO:0000250"/>
    <property type="project" value="UniProtKB"/>
</dbReference>
<dbReference type="GO" id="GO:0071549">
    <property type="term" value="P:cellular response to dexamethasone stimulus"/>
    <property type="evidence" value="ECO:0000250"/>
    <property type="project" value="UniProtKB"/>
</dbReference>
<dbReference type="GO" id="GO:0070301">
    <property type="term" value="P:cellular response to hydrogen peroxide"/>
    <property type="evidence" value="ECO:0000250"/>
    <property type="project" value="UniProtKB"/>
</dbReference>
<dbReference type="GO" id="GO:0071456">
    <property type="term" value="P:cellular response to hypoxia"/>
    <property type="evidence" value="ECO:0000250"/>
    <property type="project" value="UniProtKB"/>
</dbReference>
<dbReference type="GO" id="GO:0071260">
    <property type="term" value="P:cellular response to mechanical stimulus"/>
    <property type="evidence" value="ECO:0000250"/>
    <property type="project" value="UniProtKB"/>
</dbReference>
<dbReference type="GO" id="GO:0071288">
    <property type="term" value="P:cellular response to mercury ion"/>
    <property type="evidence" value="ECO:0000250"/>
    <property type="project" value="UniProtKB"/>
</dbReference>
<dbReference type="GO" id="GO:0071300">
    <property type="term" value="P:cellular response to retinoic acid"/>
    <property type="evidence" value="ECO:0000250"/>
    <property type="project" value="UniProtKB"/>
</dbReference>
<dbReference type="GO" id="GO:0071472">
    <property type="term" value="P:cellular response to salt stress"/>
    <property type="evidence" value="ECO:0000250"/>
    <property type="project" value="UniProtKB"/>
</dbReference>
<dbReference type="GO" id="GO:0034644">
    <property type="term" value="P:cellular response to UV"/>
    <property type="evidence" value="ECO:0000250"/>
    <property type="project" value="UniProtKB"/>
</dbReference>
<dbReference type="GO" id="GO:0019934">
    <property type="term" value="P:cGMP-mediated signaling"/>
    <property type="evidence" value="ECO:0000250"/>
    <property type="project" value="UniProtKB"/>
</dbReference>
<dbReference type="GO" id="GO:0030950">
    <property type="term" value="P:establishment or maintenance of actin cytoskeleton polarity"/>
    <property type="evidence" value="ECO:0000250"/>
    <property type="project" value="UniProtKB"/>
</dbReference>
<dbReference type="GO" id="GO:0015793">
    <property type="term" value="P:glycerol transmembrane transport"/>
    <property type="evidence" value="ECO:0000250"/>
    <property type="project" value="UniProtKB"/>
</dbReference>
<dbReference type="GO" id="GO:0006972">
    <property type="term" value="P:hyperosmotic response"/>
    <property type="evidence" value="ECO:0000318"/>
    <property type="project" value="GO_Central"/>
</dbReference>
<dbReference type="GO" id="GO:0009992">
    <property type="term" value="P:intracellular water homeostasis"/>
    <property type="evidence" value="ECO:0000250"/>
    <property type="project" value="UniProtKB"/>
</dbReference>
<dbReference type="GO" id="GO:0021670">
    <property type="term" value="P:lateral ventricle development"/>
    <property type="evidence" value="ECO:0000250"/>
    <property type="project" value="UniProtKB"/>
</dbReference>
<dbReference type="GO" id="GO:0043066">
    <property type="term" value="P:negative regulation of apoptotic process"/>
    <property type="evidence" value="ECO:0000250"/>
    <property type="project" value="UniProtKB"/>
</dbReference>
<dbReference type="GO" id="GO:0030185">
    <property type="term" value="P:nitric oxide transport"/>
    <property type="evidence" value="ECO:0000250"/>
    <property type="project" value="UniProtKB"/>
</dbReference>
<dbReference type="GO" id="GO:0045766">
    <property type="term" value="P:positive regulation of angiogenesis"/>
    <property type="evidence" value="ECO:0000250"/>
    <property type="project" value="UniProtKB"/>
</dbReference>
<dbReference type="GO" id="GO:0048146">
    <property type="term" value="P:positive regulation of fibroblast proliferation"/>
    <property type="evidence" value="ECO:0000250"/>
    <property type="project" value="UniProtKB"/>
</dbReference>
<dbReference type="GO" id="GO:0046878">
    <property type="term" value="P:positive regulation of saliva secretion"/>
    <property type="evidence" value="ECO:0000250"/>
    <property type="project" value="UniProtKB"/>
</dbReference>
<dbReference type="GO" id="GO:0003097">
    <property type="term" value="P:renal water transport"/>
    <property type="evidence" value="ECO:0000250"/>
    <property type="project" value="UniProtKB"/>
</dbReference>
<dbReference type="GO" id="GO:0035377">
    <property type="term" value="P:transepithelial water transport"/>
    <property type="evidence" value="ECO:0000250"/>
    <property type="project" value="UniProtKB"/>
</dbReference>
<dbReference type="GO" id="GO:0006833">
    <property type="term" value="P:water transport"/>
    <property type="evidence" value="ECO:0000250"/>
    <property type="project" value="UniProtKB"/>
</dbReference>
<dbReference type="CDD" id="cd00333">
    <property type="entry name" value="MIP"/>
    <property type="match status" value="1"/>
</dbReference>
<dbReference type="FunFam" id="1.20.1080.10:FF:000012">
    <property type="entry name" value="Aquaporin-1"/>
    <property type="match status" value="1"/>
</dbReference>
<dbReference type="Gene3D" id="1.20.1080.10">
    <property type="entry name" value="Glycerol uptake facilitator protein"/>
    <property type="match status" value="1"/>
</dbReference>
<dbReference type="InterPro" id="IPR023271">
    <property type="entry name" value="Aquaporin-like"/>
</dbReference>
<dbReference type="InterPro" id="IPR023274">
    <property type="entry name" value="Aquaporin_1"/>
</dbReference>
<dbReference type="InterPro" id="IPR034294">
    <property type="entry name" value="Aquaporin_transptr"/>
</dbReference>
<dbReference type="InterPro" id="IPR000425">
    <property type="entry name" value="MIP"/>
</dbReference>
<dbReference type="InterPro" id="IPR022357">
    <property type="entry name" value="MIP_CS"/>
</dbReference>
<dbReference type="NCBIfam" id="TIGR00861">
    <property type="entry name" value="MIP"/>
    <property type="match status" value="1"/>
</dbReference>
<dbReference type="PANTHER" id="PTHR19139">
    <property type="entry name" value="AQUAPORIN TRANSPORTER"/>
    <property type="match status" value="1"/>
</dbReference>
<dbReference type="PANTHER" id="PTHR19139:SF161">
    <property type="entry name" value="AQUAPORIN-1"/>
    <property type="match status" value="1"/>
</dbReference>
<dbReference type="Pfam" id="PF00230">
    <property type="entry name" value="MIP"/>
    <property type="match status" value="1"/>
</dbReference>
<dbReference type="PRINTS" id="PR02013">
    <property type="entry name" value="AQUAPORIN1"/>
</dbReference>
<dbReference type="PRINTS" id="PR00783">
    <property type="entry name" value="MINTRINSICP"/>
</dbReference>
<dbReference type="SUPFAM" id="SSF81338">
    <property type="entry name" value="Aquaporin-like"/>
    <property type="match status" value="1"/>
</dbReference>
<dbReference type="PROSITE" id="PS00221">
    <property type="entry name" value="MIP"/>
    <property type="match status" value="1"/>
</dbReference>